<organism>
    <name type="scientific">Yersinia pestis</name>
    <dbReference type="NCBI Taxonomy" id="632"/>
    <lineage>
        <taxon>Bacteria</taxon>
        <taxon>Pseudomonadati</taxon>
        <taxon>Pseudomonadota</taxon>
        <taxon>Gammaproteobacteria</taxon>
        <taxon>Enterobacterales</taxon>
        <taxon>Yersiniaceae</taxon>
        <taxon>Yersinia</taxon>
    </lineage>
</organism>
<name>KATG_YERPE</name>
<accession>Q9X6B0</accession>
<accession>Q0WBX3</accession>
<evidence type="ECO:0000255" key="1">
    <source>
        <dbReference type="HAMAP-Rule" id="MF_01961"/>
    </source>
</evidence>
<evidence type="ECO:0000269" key="2">
    <source>
    </source>
</evidence>
<evidence type="ECO:0000305" key="3"/>
<comment type="function">
    <text evidence="1">Bifunctional enzyme with both catalase and broad-spectrum peroxidase activity.</text>
</comment>
<comment type="catalytic activity">
    <reaction evidence="1">
        <text>H2O2 + AH2 = A + 2 H2O</text>
        <dbReference type="Rhea" id="RHEA:30275"/>
        <dbReference type="ChEBI" id="CHEBI:13193"/>
        <dbReference type="ChEBI" id="CHEBI:15377"/>
        <dbReference type="ChEBI" id="CHEBI:16240"/>
        <dbReference type="ChEBI" id="CHEBI:17499"/>
        <dbReference type="EC" id="1.11.1.21"/>
    </reaction>
</comment>
<comment type="catalytic activity">
    <reaction evidence="1">
        <text>2 H2O2 = O2 + 2 H2O</text>
        <dbReference type="Rhea" id="RHEA:20309"/>
        <dbReference type="ChEBI" id="CHEBI:15377"/>
        <dbReference type="ChEBI" id="CHEBI:15379"/>
        <dbReference type="ChEBI" id="CHEBI:16240"/>
        <dbReference type="EC" id="1.11.1.21"/>
    </reaction>
</comment>
<comment type="cofactor">
    <cofactor evidence="1">
        <name>heme b</name>
        <dbReference type="ChEBI" id="CHEBI:60344"/>
    </cofactor>
    <text evidence="1">Binds 1 heme b (iron(II)-protoporphyrin IX) group per dimer.</text>
</comment>
<comment type="subunit">
    <text evidence="2">Homotetramer.</text>
</comment>
<comment type="subcellular location">
    <subcellularLocation>
        <location evidence="2">Periplasm</location>
    </subcellularLocation>
</comment>
<comment type="PTM">
    <text evidence="1">Formation of the three residue Trp-Tyr-Met cross-link is important for the catalase, but not the peroxidase activity of the enzyme.</text>
</comment>
<comment type="similarity">
    <text evidence="1">Belongs to the peroxidase family. Peroxidase/catalase subfamily.</text>
</comment>
<comment type="sequence caution" evidence="3">
    <conflict type="erroneous initiation">
        <sequence resource="EMBL-CDS" id="AAM84455"/>
    </conflict>
</comment>
<comment type="sequence caution" evidence="3">
    <conflict type="erroneous initiation">
        <sequence resource="EMBL-CDS" id="AAS60640"/>
    </conflict>
</comment>
<dbReference type="EC" id="1.11.1.21" evidence="1"/>
<dbReference type="EMBL" id="AF135170">
    <property type="protein sequence ID" value="AAD37313.1"/>
    <property type="molecule type" value="Genomic_DNA"/>
</dbReference>
<dbReference type="EMBL" id="AL590842">
    <property type="protein sequence ID" value="CAL21910.1"/>
    <property type="molecule type" value="Genomic_DNA"/>
</dbReference>
<dbReference type="EMBL" id="AE009952">
    <property type="protein sequence ID" value="AAM84455.1"/>
    <property type="status" value="ALT_INIT"/>
    <property type="molecule type" value="Genomic_DNA"/>
</dbReference>
<dbReference type="EMBL" id="AE017042">
    <property type="protein sequence ID" value="AAS60640.1"/>
    <property type="status" value="ALT_INIT"/>
    <property type="molecule type" value="Genomic_DNA"/>
</dbReference>
<dbReference type="PIR" id="AC0403">
    <property type="entry name" value="AC0403"/>
</dbReference>
<dbReference type="RefSeq" id="WP_002209433.1">
    <property type="nucleotide sequence ID" value="NZ_WUCM01000060.1"/>
</dbReference>
<dbReference type="RefSeq" id="YP_002348215.1">
    <property type="nucleotide sequence ID" value="NC_003143.1"/>
</dbReference>
<dbReference type="SMR" id="Q9X6B0"/>
<dbReference type="IntAct" id="Q9X6B0">
    <property type="interactions" value="8"/>
</dbReference>
<dbReference type="STRING" id="214092.YPO3319"/>
<dbReference type="PeroxiBase" id="2640">
    <property type="entry name" value="YpCP01"/>
</dbReference>
<dbReference type="PaxDb" id="214092-YPO3319"/>
<dbReference type="DNASU" id="1145817"/>
<dbReference type="EnsemblBacteria" id="AAS60640">
    <property type="protein sequence ID" value="AAS60640"/>
    <property type="gene ID" value="YP_0367"/>
</dbReference>
<dbReference type="GeneID" id="57975390"/>
<dbReference type="KEGG" id="ype:YPO3319"/>
<dbReference type="KEGG" id="ypk:y0870"/>
<dbReference type="KEGG" id="ypm:YP_0367"/>
<dbReference type="PATRIC" id="fig|214092.21.peg.3790"/>
<dbReference type="eggNOG" id="COG0376">
    <property type="taxonomic scope" value="Bacteria"/>
</dbReference>
<dbReference type="HOGENOM" id="CLU_025424_2_0_6"/>
<dbReference type="OMA" id="EIFWGPE"/>
<dbReference type="OrthoDB" id="9759743at2"/>
<dbReference type="Proteomes" id="UP000000815">
    <property type="component" value="Chromosome"/>
</dbReference>
<dbReference type="Proteomes" id="UP000001019">
    <property type="component" value="Chromosome"/>
</dbReference>
<dbReference type="Proteomes" id="UP000002490">
    <property type="component" value="Chromosome"/>
</dbReference>
<dbReference type="GO" id="GO:0005829">
    <property type="term" value="C:cytosol"/>
    <property type="evidence" value="ECO:0000318"/>
    <property type="project" value="GO_Central"/>
</dbReference>
<dbReference type="GO" id="GO:0042597">
    <property type="term" value="C:periplasmic space"/>
    <property type="evidence" value="ECO:0007669"/>
    <property type="project" value="UniProtKB-SubCell"/>
</dbReference>
<dbReference type="GO" id="GO:0004096">
    <property type="term" value="F:catalase activity"/>
    <property type="evidence" value="ECO:0000318"/>
    <property type="project" value="GO_Central"/>
</dbReference>
<dbReference type="GO" id="GO:0020037">
    <property type="term" value="F:heme binding"/>
    <property type="evidence" value="ECO:0000318"/>
    <property type="project" value="GO_Central"/>
</dbReference>
<dbReference type="GO" id="GO:0046872">
    <property type="term" value="F:metal ion binding"/>
    <property type="evidence" value="ECO:0007669"/>
    <property type="project" value="UniProtKB-KW"/>
</dbReference>
<dbReference type="GO" id="GO:0070301">
    <property type="term" value="P:cellular response to hydrogen peroxide"/>
    <property type="evidence" value="ECO:0000318"/>
    <property type="project" value="GO_Central"/>
</dbReference>
<dbReference type="GO" id="GO:0042744">
    <property type="term" value="P:hydrogen peroxide catabolic process"/>
    <property type="evidence" value="ECO:0000318"/>
    <property type="project" value="GO_Central"/>
</dbReference>
<dbReference type="CDD" id="cd00649">
    <property type="entry name" value="catalase_peroxidase_1"/>
    <property type="match status" value="1"/>
</dbReference>
<dbReference type="CDD" id="cd08200">
    <property type="entry name" value="catalase_peroxidase_2"/>
    <property type="match status" value="1"/>
</dbReference>
<dbReference type="FunFam" id="1.10.420.10:FF:000002">
    <property type="entry name" value="Catalase-peroxidase"/>
    <property type="match status" value="1"/>
</dbReference>
<dbReference type="FunFam" id="1.10.420.10:FF:000004">
    <property type="entry name" value="Catalase-peroxidase"/>
    <property type="match status" value="1"/>
</dbReference>
<dbReference type="FunFam" id="1.10.520.10:FF:000002">
    <property type="entry name" value="Catalase-peroxidase"/>
    <property type="match status" value="1"/>
</dbReference>
<dbReference type="Gene3D" id="1.10.520.10">
    <property type="match status" value="2"/>
</dbReference>
<dbReference type="Gene3D" id="1.10.420.10">
    <property type="entry name" value="Peroxidase, domain 2"/>
    <property type="match status" value="2"/>
</dbReference>
<dbReference type="HAMAP" id="MF_01961">
    <property type="entry name" value="Catal_peroxid"/>
    <property type="match status" value="1"/>
</dbReference>
<dbReference type="InterPro" id="IPR000763">
    <property type="entry name" value="Catalase_peroxidase"/>
</dbReference>
<dbReference type="InterPro" id="IPR002016">
    <property type="entry name" value="Haem_peroxidase"/>
</dbReference>
<dbReference type="InterPro" id="IPR010255">
    <property type="entry name" value="Haem_peroxidase_sf"/>
</dbReference>
<dbReference type="InterPro" id="IPR019794">
    <property type="entry name" value="Peroxidases_AS"/>
</dbReference>
<dbReference type="InterPro" id="IPR019793">
    <property type="entry name" value="Peroxidases_heam-ligand_BS"/>
</dbReference>
<dbReference type="NCBIfam" id="TIGR00198">
    <property type="entry name" value="cat_per_HPI"/>
    <property type="match status" value="1"/>
</dbReference>
<dbReference type="NCBIfam" id="NF011635">
    <property type="entry name" value="PRK15061.1"/>
    <property type="match status" value="1"/>
</dbReference>
<dbReference type="PANTHER" id="PTHR30555:SF0">
    <property type="entry name" value="CATALASE-PEROXIDASE"/>
    <property type="match status" value="1"/>
</dbReference>
<dbReference type="PANTHER" id="PTHR30555">
    <property type="entry name" value="HYDROPEROXIDASE I, BIFUNCTIONAL CATALASE-PEROXIDASE"/>
    <property type="match status" value="1"/>
</dbReference>
<dbReference type="Pfam" id="PF00141">
    <property type="entry name" value="peroxidase"/>
    <property type="match status" value="2"/>
</dbReference>
<dbReference type="PRINTS" id="PR00460">
    <property type="entry name" value="BPEROXIDASE"/>
</dbReference>
<dbReference type="PRINTS" id="PR00458">
    <property type="entry name" value="PEROXIDASE"/>
</dbReference>
<dbReference type="SUPFAM" id="SSF48113">
    <property type="entry name" value="Heme-dependent peroxidases"/>
    <property type="match status" value="2"/>
</dbReference>
<dbReference type="PROSITE" id="PS00435">
    <property type="entry name" value="PEROXIDASE_1"/>
    <property type="match status" value="1"/>
</dbReference>
<dbReference type="PROSITE" id="PS00436">
    <property type="entry name" value="PEROXIDASE_2"/>
    <property type="match status" value="1"/>
</dbReference>
<dbReference type="PROSITE" id="PS50873">
    <property type="entry name" value="PEROXIDASE_4"/>
    <property type="match status" value="1"/>
</dbReference>
<reference key="1">
    <citation type="journal article" date="1999" name="J. Bacteriol.">
        <title>Molecular characterization of KatY (antigen 5), a thermoregulated chromosomally encoded catalase-peroxidase of Yersinia pestis.</title>
        <authorList>
            <person name="Garcia E."/>
            <person name="Nedialkov Y.A."/>
            <person name="Elliott J."/>
            <person name="Motin V.L."/>
            <person name="Brubaker R.R."/>
        </authorList>
    </citation>
    <scope>NUCLEOTIDE SEQUENCE [GENOMIC DNA]</scope>
    <scope>PROTEIN SEQUENCE OF 24-31 AND 250-254</scope>
    <scope>SUBCELLULAR LOCATION</scope>
    <scope>SUBUNIT</scope>
    <source>
        <strain>KIM</strain>
    </source>
</reference>
<reference key="2">
    <citation type="journal article" date="2001" name="Nature">
        <title>Genome sequence of Yersinia pestis, the causative agent of plague.</title>
        <authorList>
            <person name="Parkhill J."/>
            <person name="Wren B.W."/>
            <person name="Thomson N.R."/>
            <person name="Titball R.W."/>
            <person name="Holden M.T.G."/>
            <person name="Prentice M.B."/>
            <person name="Sebaihia M."/>
            <person name="James K.D."/>
            <person name="Churcher C.M."/>
            <person name="Mungall K.L."/>
            <person name="Baker S."/>
            <person name="Basham D."/>
            <person name="Bentley S.D."/>
            <person name="Brooks K."/>
            <person name="Cerdeno-Tarraga A.-M."/>
            <person name="Chillingworth T."/>
            <person name="Cronin A."/>
            <person name="Davies R.M."/>
            <person name="Davis P."/>
            <person name="Dougan G."/>
            <person name="Feltwell T."/>
            <person name="Hamlin N."/>
            <person name="Holroyd S."/>
            <person name="Jagels K."/>
            <person name="Karlyshev A.V."/>
            <person name="Leather S."/>
            <person name="Moule S."/>
            <person name="Oyston P.C.F."/>
            <person name="Quail M.A."/>
            <person name="Rutherford K.M."/>
            <person name="Simmonds M."/>
            <person name="Skelton J."/>
            <person name="Stevens K."/>
            <person name="Whitehead S."/>
            <person name="Barrell B.G."/>
        </authorList>
    </citation>
    <scope>NUCLEOTIDE SEQUENCE [LARGE SCALE GENOMIC DNA]</scope>
    <source>
        <strain>CO-92 / Biovar Orientalis</strain>
    </source>
</reference>
<reference key="3">
    <citation type="journal article" date="2002" name="J. Bacteriol.">
        <title>Genome sequence of Yersinia pestis KIM.</title>
        <authorList>
            <person name="Deng W."/>
            <person name="Burland V."/>
            <person name="Plunkett G. III"/>
            <person name="Boutin A."/>
            <person name="Mayhew G.F."/>
            <person name="Liss P."/>
            <person name="Perna N.T."/>
            <person name="Rose D.J."/>
            <person name="Mau B."/>
            <person name="Zhou S."/>
            <person name="Schwartz D.C."/>
            <person name="Fetherston J.D."/>
            <person name="Lindler L.E."/>
            <person name="Brubaker R.R."/>
            <person name="Plano G.V."/>
            <person name="Straley S.C."/>
            <person name="McDonough K.A."/>
            <person name="Nilles M.L."/>
            <person name="Matson J.S."/>
            <person name="Blattner F.R."/>
            <person name="Perry R.D."/>
        </authorList>
    </citation>
    <scope>NUCLEOTIDE SEQUENCE [LARGE SCALE GENOMIC DNA]</scope>
    <source>
        <strain>KIM10+ / Biovar Mediaevalis</strain>
    </source>
</reference>
<reference key="4">
    <citation type="journal article" date="2004" name="DNA Res.">
        <title>Complete genome sequence of Yersinia pestis strain 91001, an isolate avirulent to humans.</title>
        <authorList>
            <person name="Song Y."/>
            <person name="Tong Z."/>
            <person name="Wang J."/>
            <person name="Wang L."/>
            <person name="Guo Z."/>
            <person name="Han Y."/>
            <person name="Zhang J."/>
            <person name="Pei D."/>
            <person name="Zhou D."/>
            <person name="Qin H."/>
            <person name="Pang X."/>
            <person name="Han Y."/>
            <person name="Zhai J."/>
            <person name="Li M."/>
            <person name="Cui B."/>
            <person name="Qi Z."/>
            <person name="Jin L."/>
            <person name="Dai R."/>
            <person name="Chen F."/>
            <person name="Li S."/>
            <person name="Ye C."/>
            <person name="Du Z."/>
            <person name="Lin W."/>
            <person name="Wang J."/>
            <person name="Yu J."/>
            <person name="Yang H."/>
            <person name="Wang J."/>
            <person name="Huang P."/>
            <person name="Yang R."/>
        </authorList>
    </citation>
    <scope>NUCLEOTIDE SEQUENCE [LARGE SCALE GENOMIC DNA]</scope>
    <source>
        <strain>91001 / Biovar Mediaevalis</strain>
    </source>
</reference>
<feature type="signal peptide" evidence="1 2">
    <location>
        <begin position="1"/>
        <end position="23"/>
    </location>
</feature>
<feature type="chain" id="PRO_0000055578" description="Catalase-peroxidase">
    <location>
        <begin position="24"/>
        <end position="737"/>
    </location>
</feature>
<feature type="active site" description="Proton acceptor" evidence="1">
    <location>
        <position position="103"/>
    </location>
</feature>
<feature type="binding site" description="axial binding residue" evidence="1">
    <location>
        <position position="264"/>
    </location>
    <ligand>
        <name>heme b</name>
        <dbReference type="ChEBI" id="CHEBI:60344"/>
    </ligand>
    <ligandPart>
        <name>Fe</name>
        <dbReference type="ChEBI" id="CHEBI:18248"/>
    </ligandPart>
</feature>
<feature type="site" description="Transition state stabilizer" evidence="1">
    <location>
        <position position="99"/>
    </location>
</feature>
<feature type="cross-link" description="Tryptophyl-tyrosyl-methioninium (Trp-Tyr) (with M-249)" evidence="1">
    <location>
        <begin position="102"/>
        <end position="223"/>
    </location>
</feature>
<feature type="cross-link" description="Tryptophyl-tyrosyl-methioninium (Tyr-Met) (with W-102)" evidence="1">
    <location>
        <begin position="223"/>
        <end position="249"/>
    </location>
</feature>
<sequence length="737" mass="81365">MLKKILPVLITLAIVHNTPTAWAAEAPKTDSFYLPKSLDLSPLRLHNIESNPYGKDFNYAQQFKTLDLEAVKKDIKTVLTTSQDWWPADYGNYGPFFIRMAWHGAGTYRIYDGRGGADGGQQRFEPLNSWPDNANLDKARRLLWPIKKKYGAKISWGDLMVLTGNVALESMGFKTLGFAGGREDDWQSDLVYWGAGNKMLSDNRDKNGKLPKPLAATQMGLIYVNPEGPNGKPDPVAAAKDIREAFARMAMNDEETVALIAGGHTFGKAHGAASPEKCLGAAPGEAGLEQQGLGWANKCGSGNGKDTITSGLEGAWTTDPTHFTMQYLSNLYKHEWVLTKSPAGAWQWKPKNAANVVPDATDPTKFHPLMMFTTDIALKVDPEYKKITTRFLENPEEFKMAFARAWFKLTHRDMGPAARYLGDEVPKETFIWQDPLPAANYKMIDSADISELKDKILKTGLSDTKLIKTAWASASTFRGTDFRGGDNGARIRLAPQKDWPVNDPAELHSVLAALMEVQNNFNKDRSDGKKVSLSDLIVLGGNAAIEDAAKKAGYSISIPFTPGRTDASQEETDVSSFAVLEPTADGFRNYYDAKRNTLSPIASLIDRANKLELTVPEMTVLIGGLRVLDVNSGGSKAGVLTNTPGQLNNNFFVNLLDMSTKWTKSPKAEGYFDGYDRKTGKLKWTASSVDLVFGSNPELRAVAEVYASDDAKEKFVHDFTKVWEKVMNLDRFDIKNN</sequence>
<gene>
    <name evidence="1" type="primary">katG</name>
    <name type="synonym">katY</name>
    <name type="ordered locus">YPO3319</name>
    <name type="ordered locus">y0870</name>
    <name type="ordered locus">YP_0367</name>
</gene>
<keyword id="KW-0903">Direct protein sequencing</keyword>
<keyword id="KW-0349">Heme</keyword>
<keyword id="KW-0376">Hydrogen peroxide</keyword>
<keyword id="KW-0408">Iron</keyword>
<keyword id="KW-0479">Metal-binding</keyword>
<keyword id="KW-0560">Oxidoreductase</keyword>
<keyword id="KW-0574">Periplasm</keyword>
<keyword id="KW-0575">Peroxidase</keyword>
<keyword id="KW-1185">Reference proteome</keyword>
<keyword id="KW-0732">Signal</keyword>
<proteinExistence type="evidence at protein level"/>
<protein>
    <recommendedName>
        <fullName evidence="1">Catalase-peroxidase</fullName>
        <shortName evidence="1">CP</shortName>
        <ecNumber evidence="1">1.11.1.21</ecNumber>
    </recommendedName>
    <alternativeName>
        <fullName>Antigen 5</fullName>
    </alternativeName>
    <alternativeName>
        <fullName evidence="1">Peroxidase/catalase</fullName>
    </alternativeName>
</protein>